<name>U161_ARATH</name>
<sequence>MAVVISIHRPYVTLTISKNRNPLKPHRQFNESCLRFDHLPRNTKNQLRCLSAKSTPSKPDPASPQDGEELESVGVKAALAMLRFYKREISPVLPRSCRYVPTCSEYSMEAYKKYGVLKGTVLTTWRLCRCNPLGGSGFDPPRWFGESGIKLREGDEEEEDNYDDEDQRKI</sequence>
<keyword id="KW-1185">Reference proteome</keyword>
<protein>
    <recommendedName>
        <fullName>UPF0161 protein At3g09310</fullName>
    </recommendedName>
</protein>
<dbReference type="EMBL" id="AC011436">
    <property type="protein sequence ID" value="AAF14028.1"/>
    <property type="status" value="ALT_SEQ"/>
    <property type="molecule type" value="Genomic_DNA"/>
</dbReference>
<dbReference type="EMBL" id="CP002686">
    <property type="protein sequence ID" value="AEE74749.1"/>
    <property type="molecule type" value="Genomic_DNA"/>
</dbReference>
<dbReference type="EMBL" id="BT024873">
    <property type="protein sequence ID" value="ABD65604.1"/>
    <property type="molecule type" value="mRNA"/>
</dbReference>
<dbReference type="RefSeq" id="NP_187542.2">
    <property type="nucleotide sequence ID" value="NM_111765.3"/>
</dbReference>
<dbReference type="FunCoup" id="Q9SR32">
    <property type="interactions" value="3"/>
</dbReference>
<dbReference type="iPTMnet" id="Q9SR32"/>
<dbReference type="PaxDb" id="3702-AT3G09310.1"/>
<dbReference type="ProteomicsDB" id="242807"/>
<dbReference type="EnsemblPlants" id="AT3G09310.1">
    <property type="protein sequence ID" value="AT3G09310.1"/>
    <property type="gene ID" value="AT3G09310"/>
</dbReference>
<dbReference type="GeneID" id="820087"/>
<dbReference type="Gramene" id="AT3G09310.1">
    <property type="protein sequence ID" value="AT3G09310.1"/>
    <property type="gene ID" value="AT3G09310"/>
</dbReference>
<dbReference type="KEGG" id="ath:AT3G09310"/>
<dbReference type="Araport" id="AT3G09310"/>
<dbReference type="TAIR" id="AT3G09310"/>
<dbReference type="eggNOG" id="ENOG502S1FR">
    <property type="taxonomic scope" value="Eukaryota"/>
</dbReference>
<dbReference type="HOGENOM" id="CLU_142504_0_0_1"/>
<dbReference type="InParanoid" id="Q9SR32"/>
<dbReference type="OMA" id="VSIHRPY"/>
<dbReference type="PhylomeDB" id="Q9SR32"/>
<dbReference type="PRO" id="PR:Q9SR32"/>
<dbReference type="Proteomes" id="UP000006548">
    <property type="component" value="Chromosome 3"/>
</dbReference>
<dbReference type="ExpressionAtlas" id="Q9SR32">
    <property type="expression patterns" value="baseline and differential"/>
</dbReference>
<dbReference type="HAMAP" id="MF_00386">
    <property type="entry name" value="UPF0161_YidD"/>
    <property type="match status" value="1"/>
</dbReference>
<dbReference type="InterPro" id="IPR002696">
    <property type="entry name" value="Membr_insert_effic_factor_YidD"/>
</dbReference>
<dbReference type="NCBIfam" id="TIGR00278">
    <property type="entry name" value="membrane protein insertion efficiency factor YidD"/>
    <property type="match status" value="1"/>
</dbReference>
<dbReference type="PANTHER" id="PTHR33383">
    <property type="entry name" value="MEMBRANE PROTEIN INSERTION EFFICIENCY FACTOR-RELATED"/>
    <property type="match status" value="1"/>
</dbReference>
<dbReference type="PANTHER" id="PTHR33383:SF1">
    <property type="entry name" value="MEMBRANE PROTEIN INSERTION EFFICIENCY FACTOR-RELATED"/>
    <property type="match status" value="1"/>
</dbReference>
<dbReference type="Pfam" id="PF01809">
    <property type="entry name" value="YidD"/>
    <property type="match status" value="1"/>
</dbReference>
<dbReference type="SMART" id="SM01234">
    <property type="entry name" value="Haemolytic"/>
    <property type="match status" value="1"/>
</dbReference>
<feature type="chain" id="PRO_0000171902" description="UPF0161 protein At3g09310">
    <location>
        <begin position="1"/>
        <end position="170"/>
    </location>
</feature>
<feature type="region of interest" description="Disordered" evidence="1">
    <location>
        <begin position="49"/>
        <end position="70"/>
    </location>
</feature>
<feature type="region of interest" description="Disordered" evidence="1">
    <location>
        <begin position="147"/>
        <end position="170"/>
    </location>
</feature>
<feature type="compositionally biased region" description="Acidic residues" evidence="1">
    <location>
        <begin position="154"/>
        <end position="170"/>
    </location>
</feature>
<gene>
    <name type="ordered locus">At3g09310</name>
    <name type="ORF">F3L24.18</name>
</gene>
<organism>
    <name type="scientific">Arabidopsis thaliana</name>
    <name type="common">Mouse-ear cress</name>
    <dbReference type="NCBI Taxonomy" id="3702"/>
    <lineage>
        <taxon>Eukaryota</taxon>
        <taxon>Viridiplantae</taxon>
        <taxon>Streptophyta</taxon>
        <taxon>Embryophyta</taxon>
        <taxon>Tracheophyta</taxon>
        <taxon>Spermatophyta</taxon>
        <taxon>Magnoliopsida</taxon>
        <taxon>eudicotyledons</taxon>
        <taxon>Gunneridae</taxon>
        <taxon>Pentapetalae</taxon>
        <taxon>rosids</taxon>
        <taxon>malvids</taxon>
        <taxon>Brassicales</taxon>
        <taxon>Brassicaceae</taxon>
        <taxon>Camelineae</taxon>
        <taxon>Arabidopsis</taxon>
    </lineage>
</organism>
<proteinExistence type="evidence at transcript level"/>
<evidence type="ECO:0000256" key="1">
    <source>
        <dbReference type="SAM" id="MobiDB-lite"/>
    </source>
</evidence>
<evidence type="ECO:0000305" key="2"/>
<reference key="1">
    <citation type="journal article" date="2000" name="Nature">
        <title>Sequence and analysis of chromosome 3 of the plant Arabidopsis thaliana.</title>
        <authorList>
            <person name="Salanoubat M."/>
            <person name="Lemcke K."/>
            <person name="Rieger M."/>
            <person name="Ansorge W."/>
            <person name="Unseld M."/>
            <person name="Fartmann B."/>
            <person name="Valle G."/>
            <person name="Bloecker H."/>
            <person name="Perez-Alonso M."/>
            <person name="Obermaier B."/>
            <person name="Delseny M."/>
            <person name="Boutry M."/>
            <person name="Grivell L.A."/>
            <person name="Mache R."/>
            <person name="Puigdomenech P."/>
            <person name="De Simone V."/>
            <person name="Choisne N."/>
            <person name="Artiguenave F."/>
            <person name="Robert C."/>
            <person name="Brottier P."/>
            <person name="Wincker P."/>
            <person name="Cattolico L."/>
            <person name="Weissenbach J."/>
            <person name="Saurin W."/>
            <person name="Quetier F."/>
            <person name="Schaefer M."/>
            <person name="Mueller-Auer S."/>
            <person name="Gabel C."/>
            <person name="Fuchs M."/>
            <person name="Benes V."/>
            <person name="Wurmbach E."/>
            <person name="Drzonek H."/>
            <person name="Erfle H."/>
            <person name="Jordan N."/>
            <person name="Bangert S."/>
            <person name="Wiedelmann R."/>
            <person name="Kranz H."/>
            <person name="Voss H."/>
            <person name="Holland R."/>
            <person name="Brandt P."/>
            <person name="Nyakatura G."/>
            <person name="Vezzi A."/>
            <person name="D'Angelo M."/>
            <person name="Pallavicini A."/>
            <person name="Toppo S."/>
            <person name="Simionati B."/>
            <person name="Conrad A."/>
            <person name="Hornischer K."/>
            <person name="Kauer G."/>
            <person name="Loehnert T.-H."/>
            <person name="Nordsiek G."/>
            <person name="Reichelt J."/>
            <person name="Scharfe M."/>
            <person name="Schoen O."/>
            <person name="Bargues M."/>
            <person name="Terol J."/>
            <person name="Climent J."/>
            <person name="Navarro P."/>
            <person name="Collado C."/>
            <person name="Perez-Perez A."/>
            <person name="Ottenwaelder B."/>
            <person name="Duchemin D."/>
            <person name="Cooke R."/>
            <person name="Laudie M."/>
            <person name="Berger-Llauro C."/>
            <person name="Purnelle B."/>
            <person name="Masuy D."/>
            <person name="de Haan M."/>
            <person name="Maarse A.C."/>
            <person name="Alcaraz J.-P."/>
            <person name="Cottet A."/>
            <person name="Casacuberta E."/>
            <person name="Monfort A."/>
            <person name="Argiriou A."/>
            <person name="Flores M."/>
            <person name="Liguori R."/>
            <person name="Vitale D."/>
            <person name="Mannhaupt G."/>
            <person name="Haase D."/>
            <person name="Schoof H."/>
            <person name="Rudd S."/>
            <person name="Zaccaria P."/>
            <person name="Mewes H.-W."/>
            <person name="Mayer K.F.X."/>
            <person name="Kaul S."/>
            <person name="Town C.D."/>
            <person name="Koo H.L."/>
            <person name="Tallon L.J."/>
            <person name="Jenkins J."/>
            <person name="Rooney T."/>
            <person name="Rizzo M."/>
            <person name="Walts A."/>
            <person name="Utterback T."/>
            <person name="Fujii C.Y."/>
            <person name="Shea T.P."/>
            <person name="Creasy T.H."/>
            <person name="Haas B."/>
            <person name="Maiti R."/>
            <person name="Wu D."/>
            <person name="Peterson J."/>
            <person name="Van Aken S."/>
            <person name="Pai G."/>
            <person name="Militscher J."/>
            <person name="Sellers P."/>
            <person name="Gill J.E."/>
            <person name="Feldblyum T.V."/>
            <person name="Preuss D."/>
            <person name="Lin X."/>
            <person name="Nierman W.C."/>
            <person name="Salzberg S.L."/>
            <person name="White O."/>
            <person name="Venter J.C."/>
            <person name="Fraser C.M."/>
            <person name="Kaneko T."/>
            <person name="Nakamura Y."/>
            <person name="Sato S."/>
            <person name="Kato T."/>
            <person name="Asamizu E."/>
            <person name="Sasamoto S."/>
            <person name="Kimura T."/>
            <person name="Idesawa K."/>
            <person name="Kawashima K."/>
            <person name="Kishida Y."/>
            <person name="Kiyokawa C."/>
            <person name="Kohara M."/>
            <person name="Matsumoto M."/>
            <person name="Matsuno A."/>
            <person name="Muraki A."/>
            <person name="Nakayama S."/>
            <person name="Nakazaki N."/>
            <person name="Shinpo S."/>
            <person name="Takeuchi C."/>
            <person name="Wada T."/>
            <person name="Watanabe A."/>
            <person name="Yamada M."/>
            <person name="Yasuda M."/>
            <person name="Tabata S."/>
        </authorList>
    </citation>
    <scope>NUCLEOTIDE SEQUENCE [LARGE SCALE GENOMIC DNA]</scope>
    <source>
        <strain>cv. Columbia</strain>
    </source>
</reference>
<reference key="2">
    <citation type="journal article" date="2017" name="Plant J.">
        <title>Araport11: a complete reannotation of the Arabidopsis thaliana reference genome.</title>
        <authorList>
            <person name="Cheng C.Y."/>
            <person name="Krishnakumar V."/>
            <person name="Chan A.P."/>
            <person name="Thibaud-Nissen F."/>
            <person name="Schobel S."/>
            <person name="Town C.D."/>
        </authorList>
    </citation>
    <scope>GENOME REANNOTATION</scope>
    <source>
        <strain>cv. Columbia</strain>
    </source>
</reference>
<reference key="3">
    <citation type="submission" date="2006-03" db="EMBL/GenBank/DDBJ databases">
        <title>Arabidopsis ORF clones.</title>
        <authorList>
            <person name="Kim C.J."/>
            <person name="Chen H."/>
            <person name="Shinn P."/>
            <person name="Ecker J.R."/>
        </authorList>
    </citation>
    <scope>NUCLEOTIDE SEQUENCE [LARGE SCALE MRNA]</scope>
    <source>
        <strain>cv. Columbia</strain>
    </source>
</reference>
<accession>Q9SR32</accession>
<accession>Q24JL6</accession>
<comment type="similarity">
    <text evidence="2">Belongs to the UPF0161 family.</text>
</comment>
<comment type="sequence caution" evidence="2">
    <conflict type="erroneous gene model prediction">
        <sequence resource="EMBL-CDS" id="AAF14028"/>
    </conflict>
</comment>